<comment type="function">
    <text evidence="6 8 14">Highly reducing polyketide synthase; part of the gene cluster that mediates the biosynthesis of ochratoxin A (OTA), a mycotoxin composed of a chlorinated type I polyketide dihydroisocoumarin moiety linked to L-phenylalanine, and demonstrated to have nephrotoxic, immunotoxic, genotoxic, neurotoxic, and teratogenic properties (PubMed:24699234, PubMed:30054361). OtaA catalyzes the condensation of one acetate and 4 malonate units to form the isocoumarin group (PubMed:24699234). The pathway begins with the highly reducing polyketide synthase otaA that catalyzes the formation of the isocoumarin group during the initial stages of biosynthesis, starting from one acetate and 4 malonate units, to originate the characteristic pentaketide skeleton 7-methylmellein (7-MM) of the OTA molecule. The newly identified cyclase otaY might be involved in the polyketide cyclization reaction during the initial steps of the OTA biosynthesis. 7-MM is then oxidized into 7-carboxymellein (also called ochratoxin beta) by the cytochrome P450 monooxygenase otaC. The NRPS encoded by the otaB gene is involved in the linking of phenylalanine to the dihydroisocoumarin ring. The reaction catalyzed by NRPS results in the production of ochratoxin B (OTB), which is the non-chlorinated analog of OTA and which subsequently serves as the substrate of the halogenase otaD for chlorination activity to form the final molecular structure of OTA, containing a chlorine atom in the C-5 position of the molecule (Probable) (PubMed:33391201).</text>
</comment>
<comment type="catalytic activity">
    <reaction evidence="13">
        <text>4 malonyl-CoA + acetyl-CoA + 5 NADPH + 9 H(+) = 7-methylmellein + 3 CO2 + 5 NADP(+) + 5 CoA + 4 H2O</text>
        <dbReference type="Rhea" id="RHEA:72767"/>
        <dbReference type="ChEBI" id="CHEBI:15377"/>
        <dbReference type="ChEBI" id="CHEBI:15378"/>
        <dbReference type="ChEBI" id="CHEBI:16526"/>
        <dbReference type="ChEBI" id="CHEBI:57287"/>
        <dbReference type="ChEBI" id="CHEBI:57288"/>
        <dbReference type="ChEBI" id="CHEBI:57384"/>
        <dbReference type="ChEBI" id="CHEBI:57783"/>
        <dbReference type="ChEBI" id="CHEBI:58349"/>
        <dbReference type="ChEBI" id="CHEBI:192524"/>
    </reaction>
    <physiologicalReaction direction="left-to-right" evidence="13">
        <dbReference type="Rhea" id="RHEA:72768"/>
    </physiologicalReaction>
</comment>
<comment type="cofactor">
    <cofactor evidence="2">
        <name>pantetheine 4'-phosphate</name>
        <dbReference type="ChEBI" id="CHEBI:47942"/>
    </cofactor>
</comment>
<comment type="pathway">
    <text evidence="6 8">Mycotoxin biosynthesis.</text>
</comment>
<comment type="induction">
    <text evidence="7 8 9 10">Expression is down-regulated in the presence of fennel, cardamom, chamomile, celery, anise and rosemary essential oils (PubMed:27548221). Expression is positively regulated by the cluster-specific transcription factor otaR1 (PubMed:30054361, PubMed:33540740). Expression is also modulated by a second regulator, otaR2, which is adjacent to the biosynthetic gene cluster (PubMed:30054361). Stilbenes such as resveratrol, piceatannol and pterostilbene downregulate the expression of the ochratoxin cluster (PubMed:35082059).</text>
</comment>
<comment type="domain">
    <text evidence="13">Multidomain protein; including a ketosynthase (KS) that catalyzes repeated decarboxylative condensation to elongate the polyketide backbone; a malonyl-CoA:ACP transacylase (MAT) that selects and transfers the extender unit malonyl-CoA; a dehydratase (DH) domain that reduces hydroxyl groups to enoyl groups; a methyltransferase (CMeT) domain responsible for the incorporation of methyl groups; an enoylreductase (ER) domain that reduces enoyl groups to alkyl group; a ketoreductase (KR) domain that catalyzes beta-ketoreduction steps; and an acyl-carrier protein (ACP) that serves as the tether of the growing and completed polyketide via its phosphopantetheinyl arm.</text>
</comment>
<comment type="disruption phenotype">
    <text evidence="6 8">Abolishes the production of ochratoxin A and its degradation derivative ochratoxin alpha.</text>
</comment>
<comment type="biotechnology">
    <text evidence="10">Stilbenes such as resveratrol, piceatannol and pterostilbene affect the expression of the OTA cluster to reduce ochratoxin A and B production and thus could be used as naturally safe and efficient compounds in food active packaging or preservatives against ochratoxin A in food (PubMed:35082059). Pterostilbene with methoxy groups demonstrated greater inhibitory and antitoxic activity than resveratrol and piceatannol (PubMed:35082059).</text>
</comment>
<name>OTAA_ASPC5</name>
<gene>
    <name evidence="12" type="primary">otaA</name>
    <name evidence="11" type="synonym">OTApks</name>
    <name type="ORF">ASPCADRAFT_173482</name>
</gene>
<protein>
    <recommendedName>
        <fullName evidence="12">Highly reducing polyketide synthase otaA</fullName>
        <ecNumber evidence="6">2.3.1.-</ecNumber>
    </recommendedName>
    <alternativeName>
        <fullName evidence="12">Ochratoxin A biosynthesis cluster protein A</fullName>
    </alternativeName>
</protein>
<keyword id="KW-0012">Acyltransferase</keyword>
<keyword id="KW-0489">Methyltransferase</keyword>
<keyword id="KW-0511">Multifunctional enzyme</keyword>
<keyword id="KW-0521">NADP</keyword>
<keyword id="KW-0560">Oxidoreductase</keyword>
<keyword id="KW-0596">Phosphopantetheine</keyword>
<keyword id="KW-0597">Phosphoprotein</keyword>
<keyword id="KW-1185">Reference proteome</keyword>
<keyword id="KW-0949">S-adenosyl-L-methionine</keyword>
<keyword id="KW-0808">Transferase</keyword>
<reference key="1">
    <citation type="journal article" date="2017" name="Genome Biol.">
        <title>Comparative genomics reveals high biological diversity and specific adaptations in the industrially and medically important fungal genus Aspergillus.</title>
        <authorList>
            <person name="de Vries R.P."/>
            <person name="Riley R."/>
            <person name="Wiebenga A."/>
            <person name="Aguilar-Osorio G."/>
            <person name="Amillis S."/>
            <person name="Uchima C.A."/>
            <person name="Anderluh G."/>
            <person name="Asadollahi M."/>
            <person name="Askin M."/>
            <person name="Barry K."/>
            <person name="Battaglia E."/>
            <person name="Bayram O."/>
            <person name="Benocci T."/>
            <person name="Braus-Stromeyer S.A."/>
            <person name="Caldana C."/>
            <person name="Canovas D."/>
            <person name="Cerqueira G.C."/>
            <person name="Chen F."/>
            <person name="Chen W."/>
            <person name="Choi C."/>
            <person name="Clum A."/>
            <person name="Dos Santos R.A."/>
            <person name="Damasio A.R."/>
            <person name="Diallinas G."/>
            <person name="Emri T."/>
            <person name="Fekete E."/>
            <person name="Flipphi M."/>
            <person name="Freyberg S."/>
            <person name="Gallo A."/>
            <person name="Gournas C."/>
            <person name="Habgood R."/>
            <person name="Hainaut M."/>
            <person name="Harispe M.L."/>
            <person name="Henrissat B."/>
            <person name="Hilden K.S."/>
            <person name="Hope R."/>
            <person name="Hossain A."/>
            <person name="Karabika E."/>
            <person name="Karaffa L."/>
            <person name="Karanyi Z."/>
            <person name="Krasevec N."/>
            <person name="Kuo A."/>
            <person name="Kusch H."/>
            <person name="LaButti K."/>
            <person name="Lagendijk E.L."/>
            <person name="Lapidus A."/>
            <person name="Levasseur A."/>
            <person name="Lindquist E."/>
            <person name="Lipzen A."/>
            <person name="Logrieco A.F."/>
            <person name="MacCabe A."/>
            <person name="Maekelae M.R."/>
            <person name="Malavazi I."/>
            <person name="Melin P."/>
            <person name="Meyer V."/>
            <person name="Mielnichuk N."/>
            <person name="Miskei M."/>
            <person name="Molnar A.P."/>
            <person name="Mule G."/>
            <person name="Ngan C.Y."/>
            <person name="Orejas M."/>
            <person name="Orosz E."/>
            <person name="Ouedraogo J.P."/>
            <person name="Overkamp K.M."/>
            <person name="Park H.-S."/>
            <person name="Perrone G."/>
            <person name="Piumi F."/>
            <person name="Punt P.J."/>
            <person name="Ram A.F."/>
            <person name="Ramon A."/>
            <person name="Rauscher S."/>
            <person name="Record E."/>
            <person name="Riano-Pachon D.M."/>
            <person name="Robert V."/>
            <person name="Roehrig J."/>
            <person name="Ruller R."/>
            <person name="Salamov A."/>
            <person name="Salih N.S."/>
            <person name="Samson R.A."/>
            <person name="Sandor E."/>
            <person name="Sanguinetti M."/>
            <person name="Schuetze T."/>
            <person name="Sepcic K."/>
            <person name="Shelest E."/>
            <person name="Sherlock G."/>
            <person name="Sophianopoulou V."/>
            <person name="Squina F.M."/>
            <person name="Sun H."/>
            <person name="Susca A."/>
            <person name="Todd R.B."/>
            <person name="Tsang A."/>
            <person name="Unkles S.E."/>
            <person name="van de Wiele N."/>
            <person name="van Rossen-Uffink D."/>
            <person name="Oliveira J.V."/>
            <person name="Vesth T.C."/>
            <person name="Visser J."/>
            <person name="Yu J.-H."/>
            <person name="Zhou M."/>
            <person name="Andersen M.R."/>
            <person name="Archer D.B."/>
            <person name="Baker S.E."/>
            <person name="Benoit I."/>
            <person name="Brakhage A.A."/>
            <person name="Braus G.H."/>
            <person name="Fischer R."/>
            <person name="Frisvad J.C."/>
            <person name="Goldman G.H."/>
            <person name="Houbraken J."/>
            <person name="Oakley B."/>
            <person name="Pocsi I."/>
            <person name="Scazzocchio C."/>
            <person name="Seiboth B."/>
            <person name="vanKuyk P.A."/>
            <person name="Wortman J."/>
            <person name="Dyer P.S."/>
            <person name="Grigoriev I.V."/>
        </authorList>
    </citation>
    <scope>NUCLEOTIDE SEQUENCE [LARGE SCALE GENOMIC DNA]</scope>
    <source>
        <strain>ITEM 5010</strain>
    </source>
</reference>
<reference key="2">
    <citation type="journal article" date="2014" name="Int. J. Food Microbiol.">
        <title>Identification and characterization of the polyketide synthase involved in ochratoxin A biosynthesis in Aspergillus carbonarius.</title>
        <authorList>
            <person name="Gallo A."/>
            <person name="Knox B.P."/>
            <person name="Bruno K.S."/>
            <person name="Solfrizzo M."/>
            <person name="Baker S.E."/>
            <person name="Perrone G."/>
        </authorList>
    </citation>
    <scope>FUNCTION</scope>
    <scope>DISRUPTION PHENOTYPE</scope>
    <scope>DOMAIN</scope>
    <scope>PATHWAY</scope>
</reference>
<reference key="3">
    <citation type="journal article" date="2016" name="Toxins">
        <title>Essential oils modulate gene expression and ochratoxin A production in Aspergillus carbonarius.</title>
        <authorList>
            <person name="El Khoury R."/>
            <person name="Atoui A."/>
            <person name="Verheecke C."/>
            <person name="Maroun R."/>
            <person name="El Khoury A."/>
            <person name="Mathieu F."/>
        </authorList>
    </citation>
    <scope>INDUCTION</scope>
</reference>
<reference key="4">
    <citation type="journal article" date="2018" name="Appl. Environ. Microbiol.">
        <title>A consensus ochratoxin A biosynthetic pathway: insights from the genome sequence of Aspergillus ochraceus and a comparative genomic analysis.</title>
        <authorList>
            <person name="Wang Y."/>
            <person name="Wang L."/>
            <person name="Wu F."/>
            <person name="Liu F."/>
            <person name="Wang Q."/>
            <person name="Zhang X."/>
            <person name="Selvaraj J.N."/>
            <person name="Zhao Y."/>
            <person name="Xing F."/>
            <person name="Yin W.B."/>
            <person name="Liu Y."/>
        </authorList>
    </citation>
    <scope>FUNCTION</scope>
    <scope>INDUCTION</scope>
    <scope>PATHWAY</scope>
</reference>
<reference key="5">
    <citation type="journal article" date="2020" name="Front. Microbiol.">
        <title>Comparative genomic analysis of ochratoxin A biosynthetic cluster in producing fungi: new evidence of a cyclase gene involvement.</title>
        <authorList>
            <person name="Ferrara M."/>
            <person name="Gallo A."/>
            <person name="Perrone G."/>
            <person name="Magista D."/>
            <person name="Baker S.E."/>
        </authorList>
    </citation>
    <scope>FUNCTION</scope>
</reference>
<reference key="6">
    <citation type="journal article" date="2021" name="Toxins">
        <title>Functional role of Aspergillus carbonarius AcOTAbZIP gene, a bZIP transcription factor within the OTA gene cluster.</title>
        <authorList>
            <person name="Gerin D."/>
            <person name="Garrapa F."/>
            <person name="Ballester A.R."/>
            <person name="Gonzalez-Candelas L."/>
            <person name="De Miccolis Angelini R.M."/>
            <person name="Faretra F."/>
            <person name="Pollastro S."/>
        </authorList>
    </citation>
    <scope>INDUCTION</scope>
</reference>
<reference key="7">
    <citation type="journal article" date="2022" name="Food Microbiol.">
        <title>Three stilbenes make difference to the antifungal effects on ochratoxin A and its precursor production of Aspergillus carbonarius.</title>
        <authorList>
            <person name="Cai X."/>
            <person name="Qi J."/>
            <person name="Xu Z."/>
            <person name="Huang L."/>
            <person name="Li Y."/>
            <person name="Ren X."/>
            <person name="Kong Q."/>
        </authorList>
    </citation>
    <scope>INDUCTION</scope>
    <scope>BIOTECHNOLOGY</scope>
</reference>
<evidence type="ECO:0000255" key="1"/>
<evidence type="ECO:0000255" key="2">
    <source>
        <dbReference type="PROSITE-ProRule" id="PRU00258"/>
    </source>
</evidence>
<evidence type="ECO:0000255" key="3">
    <source>
        <dbReference type="PROSITE-ProRule" id="PRU01019"/>
    </source>
</evidence>
<evidence type="ECO:0000255" key="4">
    <source>
        <dbReference type="PROSITE-ProRule" id="PRU01348"/>
    </source>
</evidence>
<evidence type="ECO:0000255" key="5">
    <source>
        <dbReference type="PROSITE-ProRule" id="PRU01363"/>
    </source>
</evidence>
<evidence type="ECO:0000269" key="6">
    <source>
    </source>
</evidence>
<evidence type="ECO:0000269" key="7">
    <source>
    </source>
</evidence>
<evidence type="ECO:0000269" key="8">
    <source>
    </source>
</evidence>
<evidence type="ECO:0000269" key="9">
    <source>
    </source>
</evidence>
<evidence type="ECO:0000269" key="10">
    <source>
    </source>
</evidence>
<evidence type="ECO:0000303" key="11">
    <source>
    </source>
</evidence>
<evidence type="ECO:0000303" key="12">
    <source>
    </source>
</evidence>
<evidence type="ECO:0000305" key="13">
    <source>
    </source>
</evidence>
<evidence type="ECO:0000305" key="14">
    <source>
    </source>
</evidence>
<organism>
    <name type="scientific">Aspergillus carbonarius (strain ITEM 5010)</name>
    <dbReference type="NCBI Taxonomy" id="602072"/>
    <lineage>
        <taxon>Eukaryota</taxon>
        <taxon>Fungi</taxon>
        <taxon>Dikarya</taxon>
        <taxon>Ascomycota</taxon>
        <taxon>Pezizomycotina</taxon>
        <taxon>Eurotiomycetes</taxon>
        <taxon>Eurotiomycetidae</taxon>
        <taxon>Eurotiales</taxon>
        <taxon>Aspergillaceae</taxon>
        <taxon>Aspergillus</taxon>
        <taxon>Aspergillus subgen. Circumdati</taxon>
    </lineage>
</organism>
<feature type="chain" id="PRO_0000440588" description="Highly reducing polyketide synthase otaA">
    <location>
        <begin position="1"/>
        <end position="2541"/>
    </location>
</feature>
<feature type="domain" description="Ketosynthase family 3 (KS3)" evidence="4 13">
    <location>
        <begin position="9"/>
        <end position="431"/>
    </location>
</feature>
<feature type="domain" description="Malonyl-CoA:ACP transacylase (MAT)" evidence="1 13">
    <location>
        <begin position="571"/>
        <end position="888"/>
    </location>
</feature>
<feature type="domain" description="PKS/mFAS DH" evidence="5">
    <location>
        <begin position="957"/>
        <end position="1254"/>
    </location>
</feature>
<feature type="domain" description="Enoyl reductase (ER)" evidence="1 13">
    <location>
        <begin position="1838"/>
        <end position="2141"/>
    </location>
</feature>
<feature type="domain" description="Ketoreductase (KR)" evidence="1 13">
    <location>
        <begin position="2165"/>
        <end position="2344"/>
    </location>
</feature>
<feature type="domain" description="Carrier" evidence="2">
    <location>
        <begin position="2453"/>
        <end position="2530"/>
    </location>
</feature>
<feature type="region of interest" description="Dehydratase (DH) domain" evidence="1 13">
    <location>
        <begin position="957"/>
        <end position="1251"/>
    </location>
</feature>
<feature type="region of interest" description="N-terminal hotdog fold" evidence="5">
    <location>
        <begin position="957"/>
        <end position="1092"/>
    </location>
</feature>
<feature type="region of interest" description="C-terminal hotdog fold" evidence="5">
    <location>
        <begin position="1108"/>
        <end position="1254"/>
    </location>
</feature>
<feature type="region of interest" description="Methyltransferase (CMeT) domain" evidence="1 13">
    <location>
        <begin position="1433"/>
        <end position="1605"/>
    </location>
</feature>
<feature type="active site" description="For beta-ketoacyl synthase activity" evidence="4">
    <location>
        <position position="182"/>
    </location>
</feature>
<feature type="active site" description="For beta-ketoacyl synthase activity" evidence="4">
    <location>
        <position position="317"/>
    </location>
</feature>
<feature type="active site" description="For beta-ketoacyl synthase activity" evidence="4">
    <location>
        <position position="355"/>
    </location>
</feature>
<feature type="binding site" evidence="3">
    <location>
        <position position="1420"/>
    </location>
    <ligand>
        <name>S-adenosyl-L-methionine</name>
        <dbReference type="ChEBI" id="CHEBI:59789"/>
    </ligand>
</feature>
<feature type="binding site" evidence="3">
    <location>
        <position position="1442"/>
    </location>
    <ligand>
        <name>S-adenosyl-L-methionine</name>
        <dbReference type="ChEBI" id="CHEBI:59789"/>
    </ligand>
</feature>
<feature type="modified residue" description="O-(pantetheine 4'-phosphoryl)serine" evidence="2">
    <location>
        <position position="2490"/>
    </location>
</feature>
<proteinExistence type="evidence at protein level"/>
<dbReference type="EC" id="2.3.1.-" evidence="6"/>
<dbReference type="EMBL" id="KV907504">
    <property type="protein sequence ID" value="OOF93599.1"/>
    <property type="molecule type" value="Genomic_DNA"/>
</dbReference>
<dbReference type="SMR" id="A0A1R3RGK0"/>
<dbReference type="STRING" id="602072.A0A1R3RGK0"/>
<dbReference type="VEuPathDB" id="FungiDB:ASPCADRAFT_173482"/>
<dbReference type="OMA" id="EPERRWC"/>
<dbReference type="OrthoDB" id="329835at2759"/>
<dbReference type="BioCyc" id="MetaCyc:MONOMER-21059"/>
<dbReference type="PHI-base" id="PHI:10950"/>
<dbReference type="Proteomes" id="UP000188318">
    <property type="component" value="Unassembled WGS sequence"/>
</dbReference>
<dbReference type="GO" id="GO:0004315">
    <property type="term" value="F:3-oxoacyl-[acyl-carrier-protein] synthase activity"/>
    <property type="evidence" value="ECO:0007669"/>
    <property type="project" value="InterPro"/>
</dbReference>
<dbReference type="GO" id="GO:0004312">
    <property type="term" value="F:fatty acid synthase activity"/>
    <property type="evidence" value="ECO:0007669"/>
    <property type="project" value="TreeGrafter"/>
</dbReference>
<dbReference type="GO" id="GO:0008168">
    <property type="term" value="F:methyltransferase activity"/>
    <property type="evidence" value="ECO:0007669"/>
    <property type="project" value="UniProtKB-KW"/>
</dbReference>
<dbReference type="GO" id="GO:0016491">
    <property type="term" value="F:oxidoreductase activity"/>
    <property type="evidence" value="ECO:0007669"/>
    <property type="project" value="UniProtKB-KW"/>
</dbReference>
<dbReference type="GO" id="GO:0031177">
    <property type="term" value="F:phosphopantetheine binding"/>
    <property type="evidence" value="ECO:0007669"/>
    <property type="project" value="InterPro"/>
</dbReference>
<dbReference type="GO" id="GO:0016218">
    <property type="term" value="F:polyketide synthase activity"/>
    <property type="evidence" value="ECO:0000315"/>
    <property type="project" value="UniProt"/>
</dbReference>
<dbReference type="GO" id="GO:0006633">
    <property type="term" value="P:fatty acid biosynthetic process"/>
    <property type="evidence" value="ECO:0007669"/>
    <property type="project" value="InterPro"/>
</dbReference>
<dbReference type="GO" id="GO:0032259">
    <property type="term" value="P:methylation"/>
    <property type="evidence" value="ECO:0007669"/>
    <property type="project" value="UniProtKB-KW"/>
</dbReference>
<dbReference type="GO" id="GO:1900818">
    <property type="term" value="P:ochratoxin A biosynthetic process"/>
    <property type="evidence" value="ECO:0000315"/>
    <property type="project" value="GO_Central"/>
</dbReference>
<dbReference type="CDD" id="cd02440">
    <property type="entry name" value="AdoMet_MTases"/>
    <property type="match status" value="1"/>
</dbReference>
<dbReference type="CDD" id="cd05195">
    <property type="entry name" value="enoyl_red"/>
    <property type="match status" value="1"/>
</dbReference>
<dbReference type="CDD" id="cd00833">
    <property type="entry name" value="PKS"/>
    <property type="match status" value="1"/>
</dbReference>
<dbReference type="Gene3D" id="3.30.70.3290">
    <property type="match status" value="1"/>
</dbReference>
<dbReference type="Gene3D" id="3.40.47.10">
    <property type="match status" value="1"/>
</dbReference>
<dbReference type="Gene3D" id="1.10.1200.10">
    <property type="entry name" value="ACP-like"/>
    <property type="match status" value="1"/>
</dbReference>
<dbReference type="Gene3D" id="3.40.366.10">
    <property type="entry name" value="Malonyl-Coenzyme A Acyl Carrier Protein, domain 2"/>
    <property type="match status" value="1"/>
</dbReference>
<dbReference type="Gene3D" id="3.90.180.10">
    <property type="entry name" value="Medium-chain alcohol dehydrogenases, catalytic domain"/>
    <property type="match status" value="1"/>
</dbReference>
<dbReference type="Gene3D" id="3.40.50.720">
    <property type="entry name" value="NAD(P)-binding Rossmann-like Domain"/>
    <property type="match status" value="1"/>
</dbReference>
<dbReference type="Gene3D" id="3.10.129.110">
    <property type="entry name" value="Polyketide synthase dehydratase"/>
    <property type="match status" value="1"/>
</dbReference>
<dbReference type="Gene3D" id="3.40.50.150">
    <property type="entry name" value="Vaccinia Virus protein VP39"/>
    <property type="match status" value="1"/>
</dbReference>
<dbReference type="InterPro" id="IPR001227">
    <property type="entry name" value="Ac_transferase_dom_sf"/>
</dbReference>
<dbReference type="InterPro" id="IPR036736">
    <property type="entry name" value="ACP-like_sf"/>
</dbReference>
<dbReference type="InterPro" id="IPR014043">
    <property type="entry name" value="Acyl_transferase_dom"/>
</dbReference>
<dbReference type="InterPro" id="IPR016035">
    <property type="entry name" value="Acyl_Trfase/lysoPLipase"/>
</dbReference>
<dbReference type="InterPro" id="IPR013154">
    <property type="entry name" value="ADH-like_N"/>
</dbReference>
<dbReference type="InterPro" id="IPR011032">
    <property type="entry name" value="GroES-like_sf"/>
</dbReference>
<dbReference type="InterPro" id="IPR018201">
    <property type="entry name" value="Ketoacyl_synth_AS"/>
</dbReference>
<dbReference type="InterPro" id="IPR014031">
    <property type="entry name" value="Ketoacyl_synth_C"/>
</dbReference>
<dbReference type="InterPro" id="IPR014030">
    <property type="entry name" value="Ketoacyl_synth_N"/>
</dbReference>
<dbReference type="InterPro" id="IPR016036">
    <property type="entry name" value="Malonyl_transacylase_ACP-bd"/>
</dbReference>
<dbReference type="InterPro" id="IPR013217">
    <property type="entry name" value="Methyltransf_12"/>
</dbReference>
<dbReference type="InterPro" id="IPR036291">
    <property type="entry name" value="NAD(P)-bd_dom_sf"/>
</dbReference>
<dbReference type="InterPro" id="IPR032821">
    <property type="entry name" value="PKS_assoc"/>
</dbReference>
<dbReference type="InterPro" id="IPR020841">
    <property type="entry name" value="PKS_Beta-ketoAc_synthase_dom"/>
</dbReference>
<dbReference type="InterPro" id="IPR042104">
    <property type="entry name" value="PKS_dehydratase_sf"/>
</dbReference>
<dbReference type="InterPro" id="IPR020807">
    <property type="entry name" value="PKS_DH"/>
</dbReference>
<dbReference type="InterPro" id="IPR049551">
    <property type="entry name" value="PKS_DH_C"/>
</dbReference>
<dbReference type="InterPro" id="IPR049552">
    <property type="entry name" value="PKS_DH_N"/>
</dbReference>
<dbReference type="InterPro" id="IPR020843">
    <property type="entry name" value="PKS_ER"/>
</dbReference>
<dbReference type="InterPro" id="IPR013968">
    <property type="entry name" value="PKS_KR"/>
</dbReference>
<dbReference type="InterPro" id="IPR049900">
    <property type="entry name" value="PKS_mFAS_DH"/>
</dbReference>
<dbReference type="InterPro" id="IPR050091">
    <property type="entry name" value="PKS_NRPS_Biosynth_Enz"/>
</dbReference>
<dbReference type="InterPro" id="IPR020806">
    <property type="entry name" value="PKS_PP-bd"/>
</dbReference>
<dbReference type="InterPro" id="IPR009081">
    <property type="entry name" value="PP-bd_ACP"/>
</dbReference>
<dbReference type="InterPro" id="IPR029063">
    <property type="entry name" value="SAM-dependent_MTases_sf"/>
</dbReference>
<dbReference type="InterPro" id="IPR016039">
    <property type="entry name" value="Thiolase-like"/>
</dbReference>
<dbReference type="PANTHER" id="PTHR43775:SF29">
    <property type="entry name" value="ASPERFURANONE POLYKETIDE SYNTHASE AFOG-RELATED"/>
    <property type="match status" value="1"/>
</dbReference>
<dbReference type="PANTHER" id="PTHR43775">
    <property type="entry name" value="FATTY ACID SYNTHASE"/>
    <property type="match status" value="1"/>
</dbReference>
<dbReference type="Pfam" id="PF23297">
    <property type="entry name" value="ACP_SdgA_C"/>
    <property type="match status" value="1"/>
</dbReference>
<dbReference type="Pfam" id="PF00698">
    <property type="entry name" value="Acyl_transf_1"/>
    <property type="match status" value="1"/>
</dbReference>
<dbReference type="Pfam" id="PF08240">
    <property type="entry name" value="ADH_N"/>
    <property type="match status" value="1"/>
</dbReference>
<dbReference type="Pfam" id="PF16197">
    <property type="entry name" value="KAsynt_C_assoc"/>
    <property type="match status" value="1"/>
</dbReference>
<dbReference type="Pfam" id="PF00109">
    <property type="entry name" value="ketoacyl-synt"/>
    <property type="match status" value="1"/>
</dbReference>
<dbReference type="Pfam" id="PF02801">
    <property type="entry name" value="Ketoacyl-synt_C"/>
    <property type="match status" value="1"/>
</dbReference>
<dbReference type="Pfam" id="PF08659">
    <property type="entry name" value="KR"/>
    <property type="match status" value="1"/>
</dbReference>
<dbReference type="Pfam" id="PF08242">
    <property type="entry name" value="Methyltransf_12"/>
    <property type="match status" value="1"/>
</dbReference>
<dbReference type="Pfam" id="PF21089">
    <property type="entry name" value="PKS_DH_N"/>
    <property type="match status" value="1"/>
</dbReference>
<dbReference type="Pfam" id="PF14765">
    <property type="entry name" value="PS-DH"/>
    <property type="match status" value="1"/>
</dbReference>
<dbReference type="SMART" id="SM00827">
    <property type="entry name" value="PKS_AT"/>
    <property type="match status" value="1"/>
</dbReference>
<dbReference type="SMART" id="SM00826">
    <property type="entry name" value="PKS_DH"/>
    <property type="match status" value="1"/>
</dbReference>
<dbReference type="SMART" id="SM00829">
    <property type="entry name" value="PKS_ER"/>
    <property type="match status" value="1"/>
</dbReference>
<dbReference type="SMART" id="SM00822">
    <property type="entry name" value="PKS_KR"/>
    <property type="match status" value="1"/>
</dbReference>
<dbReference type="SMART" id="SM00825">
    <property type="entry name" value="PKS_KS"/>
    <property type="match status" value="1"/>
</dbReference>
<dbReference type="SMART" id="SM00823">
    <property type="entry name" value="PKS_PP"/>
    <property type="match status" value="1"/>
</dbReference>
<dbReference type="SUPFAM" id="SSF47336">
    <property type="entry name" value="ACP-like"/>
    <property type="match status" value="1"/>
</dbReference>
<dbReference type="SUPFAM" id="SSF52151">
    <property type="entry name" value="FabD/lysophospholipase-like"/>
    <property type="match status" value="1"/>
</dbReference>
<dbReference type="SUPFAM" id="SSF50129">
    <property type="entry name" value="GroES-like"/>
    <property type="match status" value="1"/>
</dbReference>
<dbReference type="SUPFAM" id="SSF51735">
    <property type="entry name" value="NAD(P)-binding Rossmann-fold domains"/>
    <property type="match status" value="2"/>
</dbReference>
<dbReference type="SUPFAM" id="SSF55048">
    <property type="entry name" value="Probable ACP-binding domain of malonyl-CoA ACP transacylase"/>
    <property type="match status" value="1"/>
</dbReference>
<dbReference type="SUPFAM" id="SSF53335">
    <property type="entry name" value="S-adenosyl-L-methionine-dependent methyltransferases"/>
    <property type="match status" value="1"/>
</dbReference>
<dbReference type="SUPFAM" id="SSF53901">
    <property type="entry name" value="Thiolase-like"/>
    <property type="match status" value="1"/>
</dbReference>
<dbReference type="PROSITE" id="PS50075">
    <property type="entry name" value="CARRIER"/>
    <property type="match status" value="1"/>
</dbReference>
<dbReference type="PROSITE" id="PS00606">
    <property type="entry name" value="KS3_1"/>
    <property type="match status" value="1"/>
</dbReference>
<dbReference type="PROSITE" id="PS52004">
    <property type="entry name" value="KS3_2"/>
    <property type="match status" value="1"/>
</dbReference>
<dbReference type="PROSITE" id="PS52019">
    <property type="entry name" value="PKS_MFAS_DH"/>
    <property type="match status" value="1"/>
</dbReference>
<accession>A0A1R3RGK0</accession>
<sequence>MTFTSHPQSEPLAIIGLACKYANDINSPLDLYQQVMAARSMHGPMPPSRMDAAFYYHPSSEATGTTYAKGGYFLQSDLNAFDSPFFQLSEIDVLAMDPQQKMLLENVYHALENAGIPLKDAVSSSTSVFVGCSNNDHLALANADLLLALKGKGTGTSPSILANRISWFYDFQGTSQTIDTACSSSLVAFHQGCMDVRAGKSTMSIISGVNLMEHPAPTMYLSSLGVLSPDGRSMSFDARANGYGRGEGLGTVIIKPLTAALRDGNRIRAIVRSTGSNQDGRTPGITVPSPTAQERLIREVYKAADLDPSRTGYVEAHGTGTPVGDPLEVQAISAALGMSRDSPLYVGSVKSVVGHLEGGAGMAGLISATMAVESKTIPPVAGLQTLNPRIPQRPDLKFAKEATPWPREDVRRASINSFGFGGTNAHVVLEDVEGFFSDLFGQQLPGALQLSEVTSKALVPSAMKSAVNGIPADQPPKESSVNRLFVISAFDEAGIQRNAASLASHLESMRAITGSDGEERLLNDLCHTLNEKRTRFDWRSYHVADSIDSLRNSLQNPRPIRQSPAEKVVRFIFTGQGANWAGMAYDLLVYPLFRRRIQEAAIFLKELGSDWDLYERIASQSGELDEPTFAQSSCVAVQVALVDLLASWNVTPQTVVGHSSGEIAAAYCAGQISRQAAWKVAFCRGQVCARRTDGQGRMLAAAMPVTQLEQLVARVNKGQSTAVKVGCYNSPKNLTLTGRAEDILRAKLELDDVGALNRLLPVKVAYHSDYMRDAAPEYLDLLGDLDFGDSIHADAGIKMVSSVTGRAVSAGEAQQPSYWVDNLVSPVRFSTALLASMDDPSATGAREDALIEIGPHSTLRTAIKETFADVREFQSIQYGSLLKRYETDGSTILRTFGMLVCSGHKISLAAINDRRVGAKKTPRLLTGLPSYAFDHSRSMRGTSRRIEQAKFPAYKRHELLGVPVEDTNPVEQRWRNILRPDDLPWLRMNRMNGQIHFPGVAYLLMATEAAIQRVGNTVAISGVRLGNVSMLAPLPIPDSAAGVEIQFSIYPMKIHANSGTDWSTFRIVSYDSAEKTWTEHCVGSVRVETGPHESHEPHPGNATREECTESVDIAQMYSRFTTAGMDFGEYLRNIQEMKLSPDHQACTATITAPDIPCQAHDHYSLHPCTFESILHALLHLCKSSQGPMVTTYIEEVLVLSPQDTGVCGFEACAQTQRASATTWRSDVTITANTGRQQIRVTGLDLVQLPPSEDASDAESFYVVKWKPDVKLLTSVDALRDSASMYVAQHLPTLDEHEGFQLASGIFLLDTMDYVTRTGLPALPQHHQAFMQWMEKECRSIADGTVPLLDTALFEGIRASPDRRRELLARVAQLSARGELLVRVGTQMVPILEQKIDCLEVMFGPDNLMDRTYEEGLPGQIAPSVAGYLHCLAHAQTGIKVLEVGAGTGSATKVILDSLKPTERQDGGGLVSSVSTYHFTDISAAFFEKARARFPDWADILRPKVLNIELDPADQGFEMGSYDLVIATHVLHATADLSVSLKNIRGLLKEGGDLIVIENIQPDLMCSPLAFGLLPGWWRSVEPYRKTNPLITKDQWDQELRNAGLQSRLLIDDTDEGVNEMTAFVASRVREPPATQHVCSIIYSSRYGGQYELASQVARDLPPSCTASLVDLADISPEHTSTIGIVLVGYQGLDLSELSAHEYDRVNFLLTAFHRLLWVTCDEDEVPKSAMASGLVRTARWERDHDGVNFILLGISHRVPSASAAVSQMIRVCDHAFFSHELVPRNAEFRLEGSVLLTNRLFPATGINECIASSSRPRSKQVALEAVQHPVKLTSIGPHQPNGFHFVEDPQVDEPLLPDEVKIQIRAVGLDESDVEEMNRLIPGESAGSQGTGVVVEVGPAVHDIHVGDRVMALRTGHSGSLQTVLRTHSSAVTQVPEGLSLADAAAVPLPFTTAYHGLVNVARLEPQDTILIHNAGGATGQAAVQFACMLGATVYATVESDAQRQALLDYGVDRSRLLDGPSFAQQLARRGAKGSVDVLFNLSRESLEDRDLACLSQFGRLVGVHGQGSLPAGPTNRSYATVSIRELVQVRPKALHGTLRTISDLLTSRAIRPITPVRAGYSELQTVLSQIRQGNAGPWVLEPRANDTIPVAMKPLGDYQFDPCASYLLIGGFGGIGRSVVRWMLTRGAKNFIFLSRSGASSVPAKQLCADLLDAGCGVSDTVCDVTDATAVENALQQCGKSMPPIRGCLQCSMVLEDSMLSNMSHAQFLNAITPKVQGTIHVASALSSVKSNLDFFVLLSSSAGIIGNRGQANYSAANAFLDAFAAHLVSRGYPATSISLGSVLSVGWVAENQDRLPIALSYGAISEDLLLAILEYHMDPSWGAAQSPGTCHTVAGVRSARDFQRQSIPLPGFMAYPLFSPLRAIAGASQTAEEVAEAPIAQGLRGATSMEDAVELVTRAIVYKLARIMALSAKEIDAQRSLASYGVDSLVTVDLKAWFQREVGATVASGDLLGDSTIVQLAQQAAGGSRLVSVAMKGTE</sequence>